<gene>
    <name type="ORF">SPAC20G8.04c</name>
</gene>
<dbReference type="EC" id="1.5.5.1"/>
<dbReference type="EMBL" id="CU329670">
    <property type="protein sequence ID" value="CAB08598.1"/>
    <property type="molecule type" value="Genomic_DNA"/>
</dbReference>
<dbReference type="PIR" id="T38126">
    <property type="entry name" value="T38126"/>
</dbReference>
<dbReference type="SMR" id="P87111"/>
<dbReference type="BioGRID" id="278470">
    <property type="interactions" value="6"/>
</dbReference>
<dbReference type="FunCoup" id="P87111">
    <property type="interactions" value="254"/>
</dbReference>
<dbReference type="STRING" id="284812.P87111"/>
<dbReference type="iPTMnet" id="P87111"/>
<dbReference type="PaxDb" id="4896-SPAC20G8.04c.1"/>
<dbReference type="EnsemblFungi" id="SPAC20G8.04c.1">
    <property type="protein sequence ID" value="SPAC20G8.04c.1:pep"/>
    <property type="gene ID" value="SPAC20G8.04c"/>
</dbReference>
<dbReference type="KEGG" id="spo:2541985"/>
<dbReference type="PomBase" id="SPAC20G8.04c"/>
<dbReference type="VEuPathDB" id="FungiDB:SPAC20G8.04c"/>
<dbReference type="eggNOG" id="KOG2415">
    <property type="taxonomic scope" value="Eukaryota"/>
</dbReference>
<dbReference type="HOGENOM" id="CLU_009667_4_0_1"/>
<dbReference type="InParanoid" id="P87111"/>
<dbReference type="OMA" id="INFQNCV"/>
<dbReference type="PhylomeDB" id="P87111"/>
<dbReference type="Reactome" id="R-SPO-611105">
    <property type="pathway name" value="Respiratory electron transport"/>
</dbReference>
<dbReference type="PRO" id="PR:P87111"/>
<dbReference type="Proteomes" id="UP000002485">
    <property type="component" value="Chromosome I"/>
</dbReference>
<dbReference type="GO" id="GO:0005743">
    <property type="term" value="C:mitochondrial inner membrane"/>
    <property type="evidence" value="ECO:0000318"/>
    <property type="project" value="GO_Central"/>
</dbReference>
<dbReference type="GO" id="GO:0051539">
    <property type="term" value="F:4 iron, 4 sulfur cluster binding"/>
    <property type="evidence" value="ECO:0000255"/>
    <property type="project" value="PomBase"/>
</dbReference>
<dbReference type="GO" id="GO:0004174">
    <property type="term" value="F:electron-transferring-flavoprotein dehydrogenase activity"/>
    <property type="evidence" value="ECO:0000318"/>
    <property type="project" value="GO_Central"/>
</dbReference>
<dbReference type="GO" id="GO:0046872">
    <property type="term" value="F:metal ion binding"/>
    <property type="evidence" value="ECO:0007669"/>
    <property type="project" value="UniProtKB-KW"/>
</dbReference>
<dbReference type="GO" id="GO:0022900">
    <property type="term" value="P:electron transport chain"/>
    <property type="evidence" value="ECO:0000318"/>
    <property type="project" value="GO_Central"/>
</dbReference>
<dbReference type="FunFam" id="3.30.70.20:FF:000015">
    <property type="entry name" value="Electron transfer flavoprotein-ubiquinone oxidoreductase"/>
    <property type="match status" value="1"/>
</dbReference>
<dbReference type="Gene3D" id="3.30.70.20">
    <property type="match status" value="1"/>
</dbReference>
<dbReference type="Gene3D" id="3.30.9.90">
    <property type="match status" value="1"/>
</dbReference>
<dbReference type="Gene3D" id="3.50.50.60">
    <property type="entry name" value="FAD/NAD(P)-binding domain"/>
    <property type="match status" value="1"/>
</dbReference>
<dbReference type="InterPro" id="IPR017896">
    <property type="entry name" value="4Fe4S_Fe-S-bd"/>
</dbReference>
<dbReference type="InterPro" id="IPR040156">
    <property type="entry name" value="ETF-QO"/>
</dbReference>
<dbReference type="InterPro" id="IPR049398">
    <property type="entry name" value="ETF-QO/FixC_UQ-bd"/>
</dbReference>
<dbReference type="InterPro" id="IPR007859">
    <property type="entry name" value="ETF-QO/FixX_C"/>
</dbReference>
<dbReference type="InterPro" id="IPR006076">
    <property type="entry name" value="FAD-dep_OxRdtase"/>
</dbReference>
<dbReference type="InterPro" id="IPR036188">
    <property type="entry name" value="FAD/NAD-bd_sf"/>
</dbReference>
<dbReference type="PANTHER" id="PTHR10617">
    <property type="entry name" value="ELECTRON TRANSFER FLAVOPROTEIN-UBIQUINONE OXIDOREDUCTASE"/>
    <property type="match status" value="1"/>
</dbReference>
<dbReference type="PANTHER" id="PTHR10617:SF107">
    <property type="entry name" value="ELECTRON TRANSFER FLAVOPROTEIN-UBIQUINONE OXIDOREDUCTASE, MITOCHONDRIAL"/>
    <property type="match status" value="1"/>
</dbReference>
<dbReference type="Pfam" id="PF01266">
    <property type="entry name" value="DAO"/>
    <property type="match status" value="1"/>
</dbReference>
<dbReference type="Pfam" id="PF21162">
    <property type="entry name" value="ETFQO_UQ-bd"/>
    <property type="match status" value="1"/>
</dbReference>
<dbReference type="Pfam" id="PF05187">
    <property type="entry name" value="Fer4_ETF_QO"/>
    <property type="match status" value="1"/>
</dbReference>
<dbReference type="SUPFAM" id="SSF54862">
    <property type="entry name" value="4Fe-4S ferredoxins"/>
    <property type="match status" value="1"/>
</dbReference>
<dbReference type="SUPFAM" id="SSF54373">
    <property type="entry name" value="FAD-linked reductases, C-terminal domain"/>
    <property type="match status" value="1"/>
</dbReference>
<dbReference type="SUPFAM" id="SSF51905">
    <property type="entry name" value="FAD/NAD(P)-binding domain"/>
    <property type="match status" value="1"/>
</dbReference>
<dbReference type="PROSITE" id="PS51379">
    <property type="entry name" value="4FE4S_FER_2"/>
    <property type="match status" value="1"/>
</dbReference>
<sequence length="632" mass="69472">MSYLSRSALARSVGAKHLTGVLRKIGRRGGRSMHVLPLASPSTLLKISSQTLRQDFTVLGARNFHSSSVRLNELTDNLRKLDTIEREVEDVDVCIVGAGPAGLSAAIRIKQQAAKANRDIRVVVLEKAAEPGNHSVSGAVIQPTALDELLPNWRDDPPENCTAVTHDKMKFLIPKLHFPIPVPPAMKNHGNYVMSLAEFTRWLAAKAEEYGVEIYPSFAASEVLYNKDGSVIGVATNDFGVDSKGLPKDNFERGMAFHAPVTLFAEGAHGSLSKSIIKRFNLRGNCEPQTYGLGVKEVWRVPDENFRKGEVAHTLGWPMRNDTYGGGFMYQFGDNYVTVGLVVGLDYPNPYVSPALEFQRMKQNPFFAKVLKGGKCLEYAARALNEGGYQAIPKLVFPGGALIGCSAGFVNVAKIKGTHTAMKSGIVAADAIVDAFGRDAASKPLLLNDYEENLKNTYVFKELYSVRNIRPSFHSFLGNYGGMAYSAVEAYVLKGRVPWTLKHKGGDAKATKSASKYKPINYPKPDNVLSFDIPTSVSRSATMHAENQPCHLFDHRPKDRKSCFETYKGVENKFCPAGVYEYVNDEASSYGKRFVINSQNCVHCKTCDIKDPLQGIQWKTPQGGDGPKYTLT</sequence>
<reference key="1">
    <citation type="journal article" date="2002" name="Nature">
        <title>The genome sequence of Schizosaccharomyces pombe.</title>
        <authorList>
            <person name="Wood V."/>
            <person name="Gwilliam R."/>
            <person name="Rajandream M.A."/>
            <person name="Lyne M.H."/>
            <person name="Lyne R."/>
            <person name="Stewart A."/>
            <person name="Sgouros J.G."/>
            <person name="Peat N."/>
            <person name="Hayles J."/>
            <person name="Baker S.G."/>
            <person name="Basham D."/>
            <person name="Bowman S."/>
            <person name="Brooks K."/>
            <person name="Brown D."/>
            <person name="Brown S."/>
            <person name="Chillingworth T."/>
            <person name="Churcher C.M."/>
            <person name="Collins M."/>
            <person name="Connor R."/>
            <person name="Cronin A."/>
            <person name="Davis P."/>
            <person name="Feltwell T."/>
            <person name="Fraser A."/>
            <person name="Gentles S."/>
            <person name="Goble A."/>
            <person name="Hamlin N."/>
            <person name="Harris D.E."/>
            <person name="Hidalgo J."/>
            <person name="Hodgson G."/>
            <person name="Holroyd S."/>
            <person name="Hornsby T."/>
            <person name="Howarth S."/>
            <person name="Huckle E.J."/>
            <person name="Hunt S."/>
            <person name="Jagels K."/>
            <person name="James K.D."/>
            <person name="Jones L."/>
            <person name="Jones M."/>
            <person name="Leather S."/>
            <person name="McDonald S."/>
            <person name="McLean J."/>
            <person name="Mooney P."/>
            <person name="Moule S."/>
            <person name="Mungall K.L."/>
            <person name="Murphy L.D."/>
            <person name="Niblett D."/>
            <person name="Odell C."/>
            <person name="Oliver K."/>
            <person name="O'Neil S."/>
            <person name="Pearson D."/>
            <person name="Quail M.A."/>
            <person name="Rabbinowitsch E."/>
            <person name="Rutherford K.M."/>
            <person name="Rutter S."/>
            <person name="Saunders D."/>
            <person name="Seeger K."/>
            <person name="Sharp S."/>
            <person name="Skelton J."/>
            <person name="Simmonds M.N."/>
            <person name="Squares R."/>
            <person name="Squares S."/>
            <person name="Stevens K."/>
            <person name="Taylor K."/>
            <person name="Taylor R.G."/>
            <person name="Tivey A."/>
            <person name="Walsh S.V."/>
            <person name="Warren T."/>
            <person name="Whitehead S."/>
            <person name="Woodward J.R."/>
            <person name="Volckaert G."/>
            <person name="Aert R."/>
            <person name="Robben J."/>
            <person name="Grymonprez B."/>
            <person name="Weltjens I."/>
            <person name="Vanstreels E."/>
            <person name="Rieger M."/>
            <person name="Schaefer M."/>
            <person name="Mueller-Auer S."/>
            <person name="Gabel C."/>
            <person name="Fuchs M."/>
            <person name="Duesterhoeft A."/>
            <person name="Fritzc C."/>
            <person name="Holzer E."/>
            <person name="Moestl D."/>
            <person name="Hilbert H."/>
            <person name="Borzym K."/>
            <person name="Langer I."/>
            <person name="Beck A."/>
            <person name="Lehrach H."/>
            <person name="Reinhardt R."/>
            <person name="Pohl T.M."/>
            <person name="Eger P."/>
            <person name="Zimmermann W."/>
            <person name="Wedler H."/>
            <person name="Wambutt R."/>
            <person name="Purnelle B."/>
            <person name="Goffeau A."/>
            <person name="Cadieu E."/>
            <person name="Dreano S."/>
            <person name="Gloux S."/>
            <person name="Lelaure V."/>
            <person name="Mottier S."/>
            <person name="Galibert F."/>
            <person name="Aves S.J."/>
            <person name="Xiang Z."/>
            <person name="Hunt C."/>
            <person name="Moore K."/>
            <person name="Hurst S.M."/>
            <person name="Lucas M."/>
            <person name="Rochet M."/>
            <person name="Gaillardin C."/>
            <person name="Tallada V.A."/>
            <person name="Garzon A."/>
            <person name="Thode G."/>
            <person name="Daga R.R."/>
            <person name="Cruzado L."/>
            <person name="Jimenez J."/>
            <person name="Sanchez M."/>
            <person name="del Rey F."/>
            <person name="Benito J."/>
            <person name="Dominguez A."/>
            <person name="Revuelta J.L."/>
            <person name="Moreno S."/>
            <person name="Armstrong J."/>
            <person name="Forsburg S.L."/>
            <person name="Cerutti L."/>
            <person name="Lowe T."/>
            <person name="McCombie W.R."/>
            <person name="Paulsen I."/>
            <person name="Potashkin J."/>
            <person name="Shpakovski G.V."/>
            <person name="Ussery D."/>
            <person name="Barrell B.G."/>
            <person name="Nurse P."/>
        </authorList>
    </citation>
    <scope>NUCLEOTIDE SEQUENCE [LARGE SCALE GENOMIC DNA]</scope>
    <source>
        <strain>972 / ATCC 24843</strain>
    </source>
</reference>
<proteinExistence type="inferred from homology"/>
<organism>
    <name type="scientific">Schizosaccharomyces pombe (strain 972 / ATCC 24843)</name>
    <name type="common">Fission yeast</name>
    <dbReference type="NCBI Taxonomy" id="284812"/>
    <lineage>
        <taxon>Eukaryota</taxon>
        <taxon>Fungi</taxon>
        <taxon>Dikarya</taxon>
        <taxon>Ascomycota</taxon>
        <taxon>Taphrinomycotina</taxon>
        <taxon>Schizosaccharomycetes</taxon>
        <taxon>Schizosaccharomycetales</taxon>
        <taxon>Schizosaccharomycetaceae</taxon>
        <taxon>Schizosaccharomyces</taxon>
    </lineage>
</organism>
<protein>
    <recommendedName>
        <fullName>Probable electron transfer flavoprotein-ubiquinone oxidoreductase, mitochondrial</fullName>
        <shortName>ETF-QO</shortName>
        <shortName>ETF-ubiquinone oxidoreductase</shortName>
        <ecNumber>1.5.5.1</ecNumber>
    </recommendedName>
    <alternativeName>
        <fullName>Electron-transferring-flavoprotein dehydrogenase</fullName>
        <shortName>ETF dehydrogenase</shortName>
    </alternativeName>
</protein>
<evidence type="ECO:0000250" key="1"/>
<evidence type="ECO:0000255" key="2"/>
<evidence type="ECO:0000255" key="3">
    <source>
        <dbReference type="PROSITE-ProRule" id="PRU00711"/>
    </source>
</evidence>
<evidence type="ECO:0000305" key="4"/>
<feature type="transit peptide" description="Mitochondrion" evidence="2">
    <location>
        <begin position="1"/>
        <end status="unknown"/>
    </location>
</feature>
<feature type="chain" id="PRO_0000008666" description="Probable electron transfer flavoprotein-ubiquinone oxidoreductase, mitochondrial">
    <location>
        <begin status="unknown"/>
        <end position="632"/>
    </location>
</feature>
<feature type="domain" description="4Fe-4S ferredoxin-type" evidence="3">
    <location>
        <begin position="592"/>
        <end position="621"/>
    </location>
</feature>
<feature type="binding site" evidence="2">
    <location>
        <begin position="93"/>
        <end position="107"/>
    </location>
    <ligand>
        <name>FAD</name>
        <dbReference type="ChEBI" id="CHEBI:57692"/>
    </ligand>
</feature>
<feature type="binding site" evidence="2">
    <location>
        <position position="575"/>
    </location>
    <ligand>
        <name>[4Fe-4S] cluster</name>
        <dbReference type="ChEBI" id="CHEBI:49883"/>
    </ligand>
</feature>
<feature type="binding site" evidence="2">
    <location>
        <position position="601"/>
    </location>
    <ligand>
        <name>[4Fe-4S] cluster</name>
        <dbReference type="ChEBI" id="CHEBI:49883"/>
    </ligand>
</feature>
<feature type="binding site" evidence="2">
    <location>
        <position position="604"/>
    </location>
    <ligand>
        <name>[4Fe-4S] cluster</name>
        <dbReference type="ChEBI" id="CHEBI:49883"/>
    </ligand>
</feature>
<feature type="binding site" evidence="2">
    <location>
        <position position="607"/>
    </location>
    <ligand>
        <name>[4Fe-4S] cluster</name>
        <dbReference type="ChEBI" id="CHEBI:49883"/>
    </ligand>
</feature>
<keyword id="KW-0004">4Fe-4S</keyword>
<keyword id="KW-0249">Electron transport</keyword>
<keyword id="KW-0274">FAD</keyword>
<keyword id="KW-0285">Flavoprotein</keyword>
<keyword id="KW-0408">Iron</keyword>
<keyword id="KW-0411">Iron-sulfur</keyword>
<keyword id="KW-0472">Membrane</keyword>
<keyword id="KW-0479">Metal-binding</keyword>
<keyword id="KW-0496">Mitochondrion</keyword>
<keyword id="KW-0999">Mitochondrion inner membrane</keyword>
<keyword id="KW-0560">Oxidoreductase</keyword>
<keyword id="KW-1185">Reference proteome</keyword>
<keyword id="KW-0809">Transit peptide</keyword>
<keyword id="KW-0813">Transport</keyword>
<keyword id="KW-0830">Ubiquinone</keyword>
<comment type="function">
    <text evidence="1">Accepts electrons from ETF and reduces ubiquinone.</text>
</comment>
<comment type="catalytic activity">
    <reaction>
        <text>a ubiquinone + reduced [electron-transfer flavoprotein] = a ubiquinol + oxidized [electron-transfer flavoprotein] + H(+)</text>
        <dbReference type="Rhea" id="RHEA:24052"/>
        <dbReference type="Rhea" id="RHEA-COMP:9565"/>
        <dbReference type="Rhea" id="RHEA-COMP:9566"/>
        <dbReference type="Rhea" id="RHEA-COMP:10685"/>
        <dbReference type="Rhea" id="RHEA-COMP:10686"/>
        <dbReference type="ChEBI" id="CHEBI:15378"/>
        <dbReference type="ChEBI" id="CHEBI:16389"/>
        <dbReference type="ChEBI" id="CHEBI:17976"/>
        <dbReference type="ChEBI" id="CHEBI:57692"/>
        <dbReference type="ChEBI" id="CHEBI:58307"/>
        <dbReference type="EC" id="1.5.5.1"/>
    </reaction>
</comment>
<comment type="cofactor">
    <cofactor evidence="1">
        <name>[4Fe-4S] cluster</name>
        <dbReference type="ChEBI" id="CHEBI:49883"/>
    </cofactor>
    <text evidence="1">Binds 1 [4Fe-4S] cluster.</text>
</comment>
<comment type="cofactor">
    <cofactor evidence="1">
        <name>FAD</name>
        <dbReference type="ChEBI" id="CHEBI:57692"/>
    </cofactor>
</comment>
<comment type="subcellular location">
    <subcellularLocation>
        <location evidence="1">Mitochondrion inner membrane</location>
    </subcellularLocation>
</comment>
<comment type="similarity">
    <text evidence="4">Belongs to the ETF-QO/FixC family.</text>
</comment>
<name>ETFD_SCHPO</name>
<accession>P87111</accession>